<gene>
    <name evidence="5" type="primary">Kcns2</name>
</gene>
<organism>
    <name type="scientific">Mus musculus</name>
    <name type="common">Mouse</name>
    <dbReference type="NCBI Taxonomy" id="10090"/>
    <lineage>
        <taxon>Eukaryota</taxon>
        <taxon>Metazoa</taxon>
        <taxon>Chordata</taxon>
        <taxon>Craniata</taxon>
        <taxon>Vertebrata</taxon>
        <taxon>Euteleostomi</taxon>
        <taxon>Mammalia</taxon>
        <taxon>Eutheria</taxon>
        <taxon>Euarchontoglires</taxon>
        <taxon>Glires</taxon>
        <taxon>Rodentia</taxon>
        <taxon>Myomorpha</taxon>
        <taxon>Muroidea</taxon>
        <taxon>Muridae</taxon>
        <taxon>Murinae</taxon>
        <taxon>Mus</taxon>
        <taxon>Mus</taxon>
    </lineage>
</organism>
<reference key="1">
    <citation type="journal article" date="1997" name="J. Biol. Chem.">
        <title>New modulatory alpha subunits for mammalian Shab K+ channels.</title>
        <authorList>
            <person name="Salinas M."/>
            <person name="Duprat F."/>
            <person name="Heurteaux C."/>
            <person name="Hugnot J.-P."/>
            <person name="Lazdunski M."/>
        </authorList>
    </citation>
    <scope>NUCLEOTIDE SEQUENCE [MRNA]</scope>
    <scope>FUNCTION</scope>
    <scope>SUBUNIT</scope>
    <scope>SUBCELLULAR LOCATION</scope>
    <scope>TISSUE SPECIFICITY</scope>
</reference>
<reference key="2">
    <citation type="journal article" date="2005" name="Science">
        <title>The transcriptional landscape of the mammalian genome.</title>
        <authorList>
            <person name="Carninci P."/>
            <person name="Kasukawa T."/>
            <person name="Katayama S."/>
            <person name="Gough J."/>
            <person name="Frith M.C."/>
            <person name="Maeda N."/>
            <person name="Oyama R."/>
            <person name="Ravasi T."/>
            <person name="Lenhard B."/>
            <person name="Wells C."/>
            <person name="Kodzius R."/>
            <person name="Shimokawa K."/>
            <person name="Bajic V.B."/>
            <person name="Brenner S.E."/>
            <person name="Batalov S."/>
            <person name="Forrest A.R."/>
            <person name="Zavolan M."/>
            <person name="Davis M.J."/>
            <person name="Wilming L.G."/>
            <person name="Aidinis V."/>
            <person name="Allen J.E."/>
            <person name="Ambesi-Impiombato A."/>
            <person name="Apweiler R."/>
            <person name="Aturaliya R.N."/>
            <person name="Bailey T.L."/>
            <person name="Bansal M."/>
            <person name="Baxter L."/>
            <person name="Beisel K.W."/>
            <person name="Bersano T."/>
            <person name="Bono H."/>
            <person name="Chalk A.M."/>
            <person name="Chiu K.P."/>
            <person name="Choudhary V."/>
            <person name="Christoffels A."/>
            <person name="Clutterbuck D.R."/>
            <person name="Crowe M.L."/>
            <person name="Dalla E."/>
            <person name="Dalrymple B.P."/>
            <person name="de Bono B."/>
            <person name="Della Gatta G."/>
            <person name="di Bernardo D."/>
            <person name="Down T."/>
            <person name="Engstrom P."/>
            <person name="Fagiolini M."/>
            <person name="Faulkner G."/>
            <person name="Fletcher C.F."/>
            <person name="Fukushima T."/>
            <person name="Furuno M."/>
            <person name="Futaki S."/>
            <person name="Gariboldi M."/>
            <person name="Georgii-Hemming P."/>
            <person name="Gingeras T.R."/>
            <person name="Gojobori T."/>
            <person name="Green R.E."/>
            <person name="Gustincich S."/>
            <person name="Harbers M."/>
            <person name="Hayashi Y."/>
            <person name="Hensch T.K."/>
            <person name="Hirokawa N."/>
            <person name="Hill D."/>
            <person name="Huminiecki L."/>
            <person name="Iacono M."/>
            <person name="Ikeo K."/>
            <person name="Iwama A."/>
            <person name="Ishikawa T."/>
            <person name="Jakt M."/>
            <person name="Kanapin A."/>
            <person name="Katoh M."/>
            <person name="Kawasawa Y."/>
            <person name="Kelso J."/>
            <person name="Kitamura H."/>
            <person name="Kitano H."/>
            <person name="Kollias G."/>
            <person name="Krishnan S.P."/>
            <person name="Kruger A."/>
            <person name="Kummerfeld S.K."/>
            <person name="Kurochkin I.V."/>
            <person name="Lareau L.F."/>
            <person name="Lazarevic D."/>
            <person name="Lipovich L."/>
            <person name="Liu J."/>
            <person name="Liuni S."/>
            <person name="McWilliam S."/>
            <person name="Madan Babu M."/>
            <person name="Madera M."/>
            <person name="Marchionni L."/>
            <person name="Matsuda H."/>
            <person name="Matsuzawa S."/>
            <person name="Miki H."/>
            <person name="Mignone F."/>
            <person name="Miyake S."/>
            <person name="Morris K."/>
            <person name="Mottagui-Tabar S."/>
            <person name="Mulder N."/>
            <person name="Nakano N."/>
            <person name="Nakauchi H."/>
            <person name="Ng P."/>
            <person name="Nilsson R."/>
            <person name="Nishiguchi S."/>
            <person name="Nishikawa S."/>
            <person name="Nori F."/>
            <person name="Ohara O."/>
            <person name="Okazaki Y."/>
            <person name="Orlando V."/>
            <person name="Pang K.C."/>
            <person name="Pavan W.J."/>
            <person name="Pavesi G."/>
            <person name="Pesole G."/>
            <person name="Petrovsky N."/>
            <person name="Piazza S."/>
            <person name="Reed J."/>
            <person name="Reid J.F."/>
            <person name="Ring B.Z."/>
            <person name="Ringwald M."/>
            <person name="Rost B."/>
            <person name="Ruan Y."/>
            <person name="Salzberg S.L."/>
            <person name="Sandelin A."/>
            <person name="Schneider C."/>
            <person name="Schoenbach C."/>
            <person name="Sekiguchi K."/>
            <person name="Semple C.A."/>
            <person name="Seno S."/>
            <person name="Sessa L."/>
            <person name="Sheng Y."/>
            <person name="Shibata Y."/>
            <person name="Shimada H."/>
            <person name="Shimada K."/>
            <person name="Silva D."/>
            <person name="Sinclair B."/>
            <person name="Sperling S."/>
            <person name="Stupka E."/>
            <person name="Sugiura K."/>
            <person name="Sultana R."/>
            <person name="Takenaka Y."/>
            <person name="Taki K."/>
            <person name="Tammoja K."/>
            <person name="Tan S.L."/>
            <person name="Tang S."/>
            <person name="Taylor M.S."/>
            <person name="Tegner J."/>
            <person name="Teichmann S.A."/>
            <person name="Ueda H.R."/>
            <person name="van Nimwegen E."/>
            <person name="Verardo R."/>
            <person name="Wei C.L."/>
            <person name="Yagi K."/>
            <person name="Yamanishi H."/>
            <person name="Zabarovsky E."/>
            <person name="Zhu S."/>
            <person name="Zimmer A."/>
            <person name="Hide W."/>
            <person name="Bult C."/>
            <person name="Grimmond S.M."/>
            <person name="Teasdale R.D."/>
            <person name="Liu E.T."/>
            <person name="Brusic V."/>
            <person name="Quackenbush J."/>
            <person name="Wahlestedt C."/>
            <person name="Mattick J.S."/>
            <person name="Hume D.A."/>
            <person name="Kai C."/>
            <person name="Sasaki D."/>
            <person name="Tomaru Y."/>
            <person name="Fukuda S."/>
            <person name="Kanamori-Katayama M."/>
            <person name="Suzuki M."/>
            <person name="Aoki J."/>
            <person name="Arakawa T."/>
            <person name="Iida J."/>
            <person name="Imamura K."/>
            <person name="Itoh M."/>
            <person name="Kato T."/>
            <person name="Kawaji H."/>
            <person name="Kawagashira N."/>
            <person name="Kawashima T."/>
            <person name="Kojima M."/>
            <person name="Kondo S."/>
            <person name="Konno H."/>
            <person name="Nakano K."/>
            <person name="Ninomiya N."/>
            <person name="Nishio T."/>
            <person name="Okada M."/>
            <person name="Plessy C."/>
            <person name="Shibata K."/>
            <person name="Shiraki T."/>
            <person name="Suzuki S."/>
            <person name="Tagami M."/>
            <person name="Waki K."/>
            <person name="Watahiki A."/>
            <person name="Okamura-Oho Y."/>
            <person name="Suzuki H."/>
            <person name="Kawai J."/>
            <person name="Hayashizaki Y."/>
        </authorList>
    </citation>
    <scope>NUCLEOTIDE SEQUENCE [LARGE SCALE MRNA]</scope>
    <source>
        <strain>C57BL/6J</strain>
        <tissue>Cerebellum</tissue>
        <tissue>Eye</tissue>
    </source>
</reference>
<reference key="3">
    <citation type="journal article" date="2004" name="Genome Res.">
        <title>The status, quality, and expansion of the NIH full-length cDNA project: the Mammalian Gene Collection (MGC).</title>
        <authorList>
            <consortium name="The MGC Project Team"/>
        </authorList>
    </citation>
    <scope>NUCLEOTIDE SEQUENCE [LARGE SCALE MRNA]</scope>
    <source>
        <strain>C57BL/6J</strain>
        <tissue>Brain</tissue>
    </source>
</reference>
<proteinExistence type="evidence at protein level"/>
<protein>
    <recommendedName>
        <fullName evidence="3">Delayed-rectifier potassium channel regulatory subunit KCNS2</fullName>
    </recommendedName>
    <alternativeName>
        <fullName>Delayed-rectifier K(+) channel alpha subunit 2</fullName>
    </alternativeName>
    <alternativeName>
        <fullName evidence="4">Delayed-rectifier potassium channel subunit Kv9.2</fullName>
    </alternativeName>
    <alternativeName>
        <fullName>Potassium voltage-gated channel subfamily S member 2</fullName>
    </alternativeName>
</protein>
<accession>O35174</accession>
<accession>Q543P3</accession>
<dbReference type="EMBL" id="AF008574">
    <property type="protein sequence ID" value="AAB72051.1"/>
    <property type="molecule type" value="mRNA"/>
</dbReference>
<dbReference type="EMBL" id="AK048819">
    <property type="protein sequence ID" value="BAC33468.1"/>
    <property type="molecule type" value="mRNA"/>
</dbReference>
<dbReference type="EMBL" id="AK087481">
    <property type="protein sequence ID" value="BAC39892.1"/>
    <property type="molecule type" value="mRNA"/>
</dbReference>
<dbReference type="EMBL" id="BC059833">
    <property type="protein sequence ID" value="AAH59833.1"/>
    <property type="molecule type" value="mRNA"/>
</dbReference>
<dbReference type="CCDS" id="CCDS27421.1"/>
<dbReference type="RefSeq" id="NP_001258633.1">
    <property type="nucleotide sequence ID" value="NM_001271704.1"/>
</dbReference>
<dbReference type="RefSeq" id="NP_851834.1">
    <property type="nucleotide sequence ID" value="NM_181317.4"/>
</dbReference>
<dbReference type="SMR" id="O35174"/>
<dbReference type="BioGRID" id="200920">
    <property type="interactions" value="5"/>
</dbReference>
<dbReference type="CORUM" id="O35174"/>
<dbReference type="FunCoup" id="O35174">
    <property type="interactions" value="21"/>
</dbReference>
<dbReference type="STRING" id="10090.ENSMUSP00000072645"/>
<dbReference type="iPTMnet" id="O35174"/>
<dbReference type="PhosphoSitePlus" id="O35174"/>
<dbReference type="PaxDb" id="10090-ENSMUSP00000072645"/>
<dbReference type="ProteomicsDB" id="263420"/>
<dbReference type="ABCD" id="O35174">
    <property type="antibodies" value="1 sequenced antibody"/>
</dbReference>
<dbReference type="Antibodypedia" id="26073">
    <property type="antibodies" value="184 antibodies from 26 providers"/>
</dbReference>
<dbReference type="DNASU" id="16539"/>
<dbReference type="Ensembl" id="ENSMUST00000072868.5">
    <property type="protein sequence ID" value="ENSMUSP00000072645.4"/>
    <property type="gene ID" value="ENSMUSG00000050963.8"/>
</dbReference>
<dbReference type="Ensembl" id="ENSMUST00000228725.2">
    <property type="protein sequence ID" value="ENSMUSP00000153984.2"/>
    <property type="gene ID" value="ENSMUSG00000050963.8"/>
</dbReference>
<dbReference type="GeneID" id="16539"/>
<dbReference type="KEGG" id="mmu:16539"/>
<dbReference type="UCSC" id="uc007vly.2">
    <property type="organism name" value="mouse"/>
</dbReference>
<dbReference type="AGR" id="MGI:1197011"/>
<dbReference type="CTD" id="3788"/>
<dbReference type="MGI" id="MGI:1197011">
    <property type="gene designation" value="Kcns2"/>
</dbReference>
<dbReference type="VEuPathDB" id="HostDB:ENSMUSG00000050963"/>
<dbReference type="eggNOG" id="KOG3713">
    <property type="taxonomic scope" value="Eukaryota"/>
</dbReference>
<dbReference type="GeneTree" id="ENSGT00940000160344"/>
<dbReference type="HOGENOM" id="CLU_011722_4_1_1"/>
<dbReference type="InParanoid" id="O35174"/>
<dbReference type="OMA" id="PAGCWWC"/>
<dbReference type="OrthoDB" id="296522at2759"/>
<dbReference type="PhylomeDB" id="O35174"/>
<dbReference type="TreeFam" id="TF313103"/>
<dbReference type="Reactome" id="R-MMU-1296072">
    <property type="pathway name" value="Voltage gated Potassium channels"/>
</dbReference>
<dbReference type="BioGRID-ORCS" id="16539">
    <property type="hits" value="1 hit in 77 CRISPR screens"/>
</dbReference>
<dbReference type="ChiTaRS" id="Kcns2">
    <property type="organism name" value="mouse"/>
</dbReference>
<dbReference type="PRO" id="PR:O35174"/>
<dbReference type="Proteomes" id="UP000000589">
    <property type="component" value="Chromosome 15"/>
</dbReference>
<dbReference type="RNAct" id="O35174">
    <property type="molecule type" value="protein"/>
</dbReference>
<dbReference type="Bgee" id="ENSMUSG00000050963">
    <property type="expression patterns" value="Expressed in medial dorsal nucleus of thalamus and 91 other cell types or tissues"/>
</dbReference>
<dbReference type="GO" id="GO:0048471">
    <property type="term" value="C:perinuclear region of cytoplasm"/>
    <property type="evidence" value="ECO:0000314"/>
    <property type="project" value="UniProtKB"/>
</dbReference>
<dbReference type="GO" id="GO:0005886">
    <property type="term" value="C:plasma membrane"/>
    <property type="evidence" value="ECO:0000314"/>
    <property type="project" value="UniProtKB"/>
</dbReference>
<dbReference type="GO" id="GO:0008076">
    <property type="term" value="C:voltage-gated potassium channel complex"/>
    <property type="evidence" value="ECO:0000314"/>
    <property type="project" value="UniProtKB"/>
</dbReference>
<dbReference type="GO" id="GO:0015459">
    <property type="term" value="F:potassium channel regulator activity"/>
    <property type="evidence" value="ECO:0000314"/>
    <property type="project" value="UniProtKB"/>
</dbReference>
<dbReference type="GO" id="GO:0005249">
    <property type="term" value="F:voltage-gated potassium channel activity"/>
    <property type="evidence" value="ECO:0007669"/>
    <property type="project" value="InterPro"/>
</dbReference>
<dbReference type="GO" id="GO:0006813">
    <property type="term" value="P:potassium ion transport"/>
    <property type="evidence" value="ECO:0000314"/>
    <property type="project" value="UniProtKB"/>
</dbReference>
<dbReference type="GO" id="GO:0051260">
    <property type="term" value="P:protein homooligomerization"/>
    <property type="evidence" value="ECO:0007669"/>
    <property type="project" value="InterPro"/>
</dbReference>
<dbReference type="GO" id="GO:1901379">
    <property type="term" value="P:regulation of potassium ion transmembrane transport"/>
    <property type="evidence" value="ECO:0000314"/>
    <property type="project" value="UniProtKB"/>
</dbReference>
<dbReference type="CDD" id="cd18427">
    <property type="entry name" value="BTB_POZ_KCNS2"/>
    <property type="match status" value="1"/>
</dbReference>
<dbReference type="FunFam" id="1.10.287.70:FF:000005">
    <property type="entry name" value="potassium voltage-gated channel subfamily G member 1"/>
    <property type="match status" value="1"/>
</dbReference>
<dbReference type="FunFam" id="1.20.120.350:FF:000029">
    <property type="entry name" value="Potassium voltage-gated channel subfamily S member 2"/>
    <property type="match status" value="1"/>
</dbReference>
<dbReference type="FunFam" id="3.30.710.10:FF:000029">
    <property type="entry name" value="potassium voltage-gated channel subfamily S member 2"/>
    <property type="match status" value="1"/>
</dbReference>
<dbReference type="Gene3D" id="1.10.287.70">
    <property type="match status" value="1"/>
</dbReference>
<dbReference type="Gene3D" id="3.30.710.10">
    <property type="entry name" value="Potassium Channel Kv1.1, Chain A"/>
    <property type="match status" value="1"/>
</dbReference>
<dbReference type="Gene3D" id="1.20.120.350">
    <property type="entry name" value="Voltage-gated potassium channels. Chain C"/>
    <property type="match status" value="1"/>
</dbReference>
<dbReference type="InterPro" id="IPR000210">
    <property type="entry name" value="BTB/POZ_dom"/>
</dbReference>
<dbReference type="InterPro" id="IPR005821">
    <property type="entry name" value="Ion_trans_dom"/>
</dbReference>
<dbReference type="InterPro" id="IPR003968">
    <property type="entry name" value="K_chnl_volt-dep_Kv"/>
</dbReference>
<dbReference type="InterPro" id="IPR003971">
    <property type="entry name" value="K_chnl_volt-dep_Kv5/Kv9"/>
</dbReference>
<dbReference type="InterPro" id="IPR011333">
    <property type="entry name" value="SKP1/BTB/POZ_sf"/>
</dbReference>
<dbReference type="InterPro" id="IPR003131">
    <property type="entry name" value="T1-type_BTB"/>
</dbReference>
<dbReference type="InterPro" id="IPR028325">
    <property type="entry name" value="VG_K_chnl"/>
</dbReference>
<dbReference type="InterPro" id="IPR027359">
    <property type="entry name" value="Volt_channel_dom_sf"/>
</dbReference>
<dbReference type="PANTHER" id="PTHR11537:SF60">
    <property type="entry name" value="POTASSIUM VOLTAGE-GATED CHANNEL SUBFAMILY S MEMBER 2"/>
    <property type="match status" value="1"/>
</dbReference>
<dbReference type="PANTHER" id="PTHR11537">
    <property type="entry name" value="VOLTAGE-GATED POTASSIUM CHANNEL"/>
    <property type="match status" value="1"/>
</dbReference>
<dbReference type="Pfam" id="PF02214">
    <property type="entry name" value="BTB_2"/>
    <property type="match status" value="1"/>
</dbReference>
<dbReference type="Pfam" id="PF00520">
    <property type="entry name" value="Ion_trans"/>
    <property type="match status" value="1"/>
</dbReference>
<dbReference type="PRINTS" id="PR00169">
    <property type="entry name" value="KCHANNEL"/>
</dbReference>
<dbReference type="PRINTS" id="PR01494">
    <property type="entry name" value="KV9CHANNEL"/>
</dbReference>
<dbReference type="PRINTS" id="PR01491">
    <property type="entry name" value="KVCHANNEL"/>
</dbReference>
<dbReference type="SMART" id="SM00225">
    <property type="entry name" value="BTB"/>
    <property type="match status" value="1"/>
</dbReference>
<dbReference type="SUPFAM" id="SSF54695">
    <property type="entry name" value="POZ domain"/>
    <property type="match status" value="1"/>
</dbReference>
<dbReference type="SUPFAM" id="SSF81324">
    <property type="entry name" value="Voltage-gated potassium channels"/>
    <property type="match status" value="1"/>
</dbReference>
<sequence length="477" mass="54289">MTRQSLWDVSDTDVEDGEIRINVGGFKRRLRSHTLLRFPETRLGRLLLCHSREAILELCDDYDDVQREFYFDRNPELFPYVLHFYHTGKLHVMAELCVFSFSQEIEYWGINEFFIDSCCSYSYHGRKVEPEQEKWDEQSDQESTTSSFDEILAFYNDASKFDGQPLGNFRRQLWLALDNPGYSVLSRVFSVLSILVVLGSIITMCLNSLPDFQIPDSQGNPGEDPRFEIVEHFGIAWFTFELVARFAVAPDFLKFFKNALNLIDLMSIVPFYITLVVNLVVESSPTLANLGRVAQVLRLMRIFRILKLARHSTGLRSLGATLKYSYKEVGLLLLYLSVGISIFSVVAYTIEKEENEGLATIPACWWWATVSMTTVGYGDVVPGTTAGKLTASACILAGILVVVLPITLIFNKFSHFYRRQKQLESAMRSCDFGDGMKEVPSVNLRDYYAHKVKSLMASLTNMSRSSPSELSLDDSLH</sequence>
<evidence type="ECO:0000250" key="1">
    <source>
        <dbReference type="UniProtKB" id="P63142"/>
    </source>
</evidence>
<evidence type="ECO:0000269" key="2">
    <source>
    </source>
</evidence>
<evidence type="ECO:0000305" key="3"/>
<evidence type="ECO:0000305" key="4">
    <source>
    </source>
</evidence>
<evidence type="ECO:0000312" key="5">
    <source>
        <dbReference type="MGI" id="MGI:1197011"/>
    </source>
</evidence>
<name>KCNS2_MOUSE</name>
<keyword id="KW-1003">Cell membrane</keyword>
<keyword id="KW-0407">Ion channel</keyword>
<keyword id="KW-0406">Ion transport</keyword>
<keyword id="KW-0472">Membrane</keyword>
<keyword id="KW-0630">Potassium</keyword>
<keyword id="KW-0631">Potassium channel</keyword>
<keyword id="KW-0633">Potassium transport</keyword>
<keyword id="KW-1185">Reference proteome</keyword>
<keyword id="KW-0812">Transmembrane</keyword>
<keyword id="KW-1133">Transmembrane helix</keyword>
<keyword id="KW-0813">Transport</keyword>
<keyword id="KW-0851">Voltage-gated channel</keyword>
<comment type="function">
    <text evidence="2">Potassium channel regulatory subunit that modulate the delayed rectifier voltage-gated potassium channel activity of KCNB1 and KCNB2 by altering their kinetics, expression levels, and shifting the half-inactivation potential to more polarized values (PubMed:9305895). While it does not form functional channels on its own, it can form functional heterotetrameric channels with KCNB1 and KCNB2 (PubMed:9305895). Each regulatory subunit has unique regulatory properties that can lead to extensive inhibition, significant changes in kinetics, and/or substantial shifts in the voltage dependencies of the inactivation process (PubMed:9305895).</text>
</comment>
<comment type="subunit">
    <text evidence="4">Heterotetramer with KCNB1 and KCNB2 (Probable). Does not form homomultimers (Probable).</text>
</comment>
<comment type="subcellular location">
    <subcellularLocation>
        <location evidence="4">Cell membrane</location>
        <topology evidence="3">Multi-pass membrane protein</topology>
    </subcellularLocation>
    <text evidence="2">May not reach the plasma membrane but remain in an intracellular compartment in the absence of KCNB1 or KCNB2 (PubMed:9305895).</text>
</comment>
<comment type="tissue specificity">
    <text evidence="2">Detected in brain, but not in the other tissues tested (PubMed:9305895). Expression was highest in the olfactory bulb, cerebral cortex, hippocampus, habenula, basolateral amygdaloid nuclei and cerebellum (PubMed:9305895).</text>
</comment>
<comment type="domain">
    <text evidence="1">The transmembrane segment S4 functions as a voltage-sensor and is characterized by a series of positively charged amino acids at every third position. Channel opening and closing is effected by a conformation change that affects the position and orientation of the voltage-sensor paddle formed by S3 and S4 within the membrane. A transmembrane electric field that is positive inside would push the positively charged S4 segment outwards, thereby opening the pore, while a field that is negative inside would pull the S4 segment inwards and close the pore. Changes in the position and orientation of S4 are then transmitted to the activation gate formed by the inner helix bundle via the S4-S5 linker region.</text>
</comment>
<comment type="similarity">
    <text evidence="3">Belongs to the potassium channel family. S (TC 1.A.1.2) subfamily. Kv9.2/KCNS2 sub-subfamily.</text>
</comment>
<feature type="chain" id="PRO_0000054085" description="Delayed-rectifier potassium channel regulatory subunit KCNS2">
    <location>
        <begin position="1"/>
        <end position="477"/>
    </location>
</feature>
<feature type="topological domain" description="Cytoplasmic" evidence="1">
    <location>
        <begin position="1"/>
        <end position="184"/>
    </location>
</feature>
<feature type="transmembrane region" description="Helical; Name=Segment S1" evidence="1">
    <location>
        <begin position="185"/>
        <end position="206"/>
    </location>
</feature>
<feature type="topological domain" description="Extracellular" evidence="1">
    <location>
        <begin position="207"/>
        <end position="225"/>
    </location>
</feature>
<feature type="transmembrane region" description="Helical; Name=Segment S2" evidence="1">
    <location>
        <begin position="226"/>
        <end position="248"/>
    </location>
</feature>
<feature type="topological domain" description="Cytoplasmic" evidence="1">
    <location>
        <begin position="249"/>
        <end position="259"/>
    </location>
</feature>
<feature type="transmembrane region" description="Helical; Name=Segment S3" evidence="1">
    <location>
        <begin position="260"/>
        <end position="280"/>
    </location>
</feature>
<feature type="topological domain" description="Extracellular" evidence="1">
    <location>
        <begin position="281"/>
        <end position="290"/>
    </location>
</feature>
<feature type="transmembrane region" description="Helical; Voltage-sensor; Name=Segment S4" evidence="1">
    <location>
        <begin position="291"/>
        <end position="311"/>
    </location>
</feature>
<feature type="topological domain" description="Cytoplasmic" evidence="1">
    <location>
        <begin position="312"/>
        <end position="326"/>
    </location>
</feature>
<feature type="transmembrane region" description="Helical; Name=Segment S5" evidence="1">
    <location>
        <begin position="327"/>
        <end position="348"/>
    </location>
</feature>
<feature type="topological domain" description="Extracellular" evidence="1">
    <location>
        <begin position="349"/>
        <end position="361"/>
    </location>
</feature>
<feature type="intramembrane region" description="Helical; Name=Pore helix" evidence="1">
    <location>
        <begin position="362"/>
        <end position="373"/>
    </location>
</feature>
<feature type="intramembrane region" evidence="1">
    <location>
        <begin position="374"/>
        <end position="381"/>
    </location>
</feature>
<feature type="topological domain" description="Extracellular" evidence="1">
    <location>
        <begin position="382"/>
        <end position="388"/>
    </location>
</feature>
<feature type="transmembrane region" description="Helical; Name=Segment S6" evidence="1">
    <location>
        <begin position="389"/>
        <end position="417"/>
    </location>
</feature>
<feature type="topological domain" description="Cytoplasmic" evidence="1">
    <location>
        <begin position="418"/>
        <end position="477"/>
    </location>
</feature>
<feature type="short sequence motif" description="Selectivity filter" evidence="1">
    <location>
        <begin position="374"/>
        <end position="379"/>
    </location>
</feature>